<reference key="1">
    <citation type="journal article" date="2009" name="Vaccine">
        <title>Whole genome sequence analysis of Mycobacterium bovis bacillus Calmette-Guerin (BCG) Tokyo 172: a comparative study of BCG vaccine substrains.</title>
        <authorList>
            <person name="Seki M."/>
            <person name="Honda I."/>
            <person name="Fujita I."/>
            <person name="Yano I."/>
            <person name="Yamamoto S."/>
            <person name="Koyama A."/>
        </authorList>
    </citation>
    <scope>NUCLEOTIDE SEQUENCE [LARGE SCALE GENOMIC DNA]</scope>
    <source>
        <strain>BCG / Tokyo 172 / ATCC 35737 / TMC 1019</strain>
    </source>
</reference>
<organism>
    <name type="scientific">Mycobacterium bovis (strain BCG / Tokyo 172 / ATCC 35737 / TMC 1019)</name>
    <dbReference type="NCBI Taxonomy" id="561275"/>
    <lineage>
        <taxon>Bacteria</taxon>
        <taxon>Bacillati</taxon>
        <taxon>Actinomycetota</taxon>
        <taxon>Actinomycetes</taxon>
        <taxon>Mycobacteriales</taxon>
        <taxon>Mycobacteriaceae</taxon>
        <taxon>Mycobacterium</taxon>
        <taxon>Mycobacterium tuberculosis complex</taxon>
    </lineage>
</organism>
<comment type="function">
    <text evidence="1">Catalyzes the ATP-dependent phosphorylation of N-acetyl-L-glutamate.</text>
</comment>
<comment type="catalytic activity">
    <reaction evidence="1">
        <text>N-acetyl-L-glutamate + ATP = N-acetyl-L-glutamyl 5-phosphate + ADP</text>
        <dbReference type="Rhea" id="RHEA:14629"/>
        <dbReference type="ChEBI" id="CHEBI:30616"/>
        <dbReference type="ChEBI" id="CHEBI:44337"/>
        <dbReference type="ChEBI" id="CHEBI:57936"/>
        <dbReference type="ChEBI" id="CHEBI:456216"/>
        <dbReference type="EC" id="2.7.2.8"/>
    </reaction>
</comment>
<comment type="pathway">
    <text evidence="1">Amino-acid biosynthesis; L-arginine biosynthesis; N(2)-acetyl-L-ornithine from L-glutamate: step 2/4.</text>
</comment>
<comment type="subcellular location">
    <subcellularLocation>
        <location evidence="1">Cytoplasm</location>
    </subcellularLocation>
</comment>
<comment type="similarity">
    <text evidence="1">Belongs to the acetylglutamate kinase family. ArgB subfamily.</text>
</comment>
<sequence>MSRIEALPTHIKAQVLAEALPWLKQLHGKVVVVKYGGNAMTDDTLRRAFAADMAFLRNCGIHPVVVHGGGPQITAMLRRLGIEGDFKGGFRVTTPEVLDVARMVLFGQVGRELVNLINAHGPYAVGITGEDAQLFTAVRRSVTVDGVATDIGLVGDVDQVNTAAMLDLVAAGRIPVVSTLAPDADGVVHNINADTAAAAVAEALGAEKLLMLTDIDGLYTRWPDRDSLVSEIDTGTLAQLLPTLESGMVPKVEACLRAVIGGVPSAHIIDGRVTHCVLVELFTDAGTGTKVVRG</sequence>
<evidence type="ECO:0000255" key="1">
    <source>
        <dbReference type="HAMAP-Rule" id="MF_00082"/>
    </source>
</evidence>
<proteinExistence type="inferred from homology"/>
<keyword id="KW-0028">Amino-acid biosynthesis</keyword>
<keyword id="KW-0055">Arginine biosynthesis</keyword>
<keyword id="KW-0067">ATP-binding</keyword>
<keyword id="KW-0963">Cytoplasm</keyword>
<keyword id="KW-0418">Kinase</keyword>
<keyword id="KW-0547">Nucleotide-binding</keyword>
<keyword id="KW-0808">Transferase</keyword>
<protein>
    <recommendedName>
        <fullName evidence="1">Acetylglutamate kinase</fullName>
        <ecNumber evidence="1">2.7.2.8</ecNumber>
    </recommendedName>
    <alternativeName>
        <fullName evidence="1">N-acetyl-L-glutamate 5-phosphotransferase</fullName>
    </alternativeName>
    <alternativeName>
        <fullName evidence="1">NAG kinase</fullName>
        <shortName evidence="1">NAGK</shortName>
    </alternativeName>
</protein>
<accession>C1ANS7</accession>
<name>ARGB_MYCBT</name>
<feature type="chain" id="PRO_1000118356" description="Acetylglutamate kinase">
    <location>
        <begin position="1"/>
        <end position="294"/>
    </location>
</feature>
<feature type="binding site" evidence="1">
    <location>
        <begin position="69"/>
        <end position="70"/>
    </location>
    <ligand>
        <name>substrate</name>
    </ligand>
</feature>
<feature type="binding site" evidence="1">
    <location>
        <position position="91"/>
    </location>
    <ligand>
        <name>substrate</name>
    </ligand>
</feature>
<feature type="binding site" evidence="1">
    <location>
        <position position="190"/>
    </location>
    <ligand>
        <name>substrate</name>
    </ligand>
</feature>
<feature type="site" description="Transition state stabilizer" evidence="1">
    <location>
        <position position="34"/>
    </location>
</feature>
<feature type="site" description="Transition state stabilizer" evidence="1">
    <location>
        <position position="251"/>
    </location>
</feature>
<dbReference type="EC" id="2.7.2.8" evidence="1"/>
<dbReference type="EMBL" id="AP010918">
    <property type="protein sequence ID" value="BAH25956.1"/>
    <property type="molecule type" value="Genomic_DNA"/>
</dbReference>
<dbReference type="RefSeq" id="WP_003408161.1">
    <property type="nucleotide sequence ID" value="NZ_CP014566.1"/>
</dbReference>
<dbReference type="SMR" id="C1ANS7"/>
<dbReference type="KEGG" id="mbt:JTY_1668"/>
<dbReference type="HOGENOM" id="CLU_053680_0_1_11"/>
<dbReference type="UniPathway" id="UPA00068">
    <property type="reaction ID" value="UER00107"/>
</dbReference>
<dbReference type="GO" id="GO:0005737">
    <property type="term" value="C:cytoplasm"/>
    <property type="evidence" value="ECO:0007669"/>
    <property type="project" value="UniProtKB-SubCell"/>
</dbReference>
<dbReference type="GO" id="GO:0003991">
    <property type="term" value="F:acetylglutamate kinase activity"/>
    <property type="evidence" value="ECO:0007669"/>
    <property type="project" value="UniProtKB-UniRule"/>
</dbReference>
<dbReference type="GO" id="GO:0005524">
    <property type="term" value="F:ATP binding"/>
    <property type="evidence" value="ECO:0007669"/>
    <property type="project" value="UniProtKB-UniRule"/>
</dbReference>
<dbReference type="GO" id="GO:0042450">
    <property type="term" value="P:arginine biosynthetic process via ornithine"/>
    <property type="evidence" value="ECO:0007669"/>
    <property type="project" value="UniProtKB-UniRule"/>
</dbReference>
<dbReference type="GO" id="GO:0006526">
    <property type="term" value="P:L-arginine biosynthetic process"/>
    <property type="evidence" value="ECO:0007669"/>
    <property type="project" value="UniProtKB-UniPathway"/>
</dbReference>
<dbReference type="CDD" id="cd04250">
    <property type="entry name" value="AAK_NAGK-C"/>
    <property type="match status" value="1"/>
</dbReference>
<dbReference type="FunFam" id="3.40.1160.10:FF:000015">
    <property type="entry name" value="Acetylglutamate kinase"/>
    <property type="match status" value="1"/>
</dbReference>
<dbReference type="Gene3D" id="3.40.1160.10">
    <property type="entry name" value="Acetylglutamate kinase-like"/>
    <property type="match status" value="1"/>
</dbReference>
<dbReference type="HAMAP" id="MF_00082">
    <property type="entry name" value="ArgB"/>
    <property type="match status" value="1"/>
</dbReference>
<dbReference type="InterPro" id="IPR036393">
    <property type="entry name" value="AceGlu_kinase-like_sf"/>
</dbReference>
<dbReference type="InterPro" id="IPR004662">
    <property type="entry name" value="AcgluKinase_fam"/>
</dbReference>
<dbReference type="InterPro" id="IPR037528">
    <property type="entry name" value="ArgB"/>
</dbReference>
<dbReference type="InterPro" id="IPR001048">
    <property type="entry name" value="Asp/Glu/Uridylate_kinase"/>
</dbReference>
<dbReference type="InterPro" id="IPR001057">
    <property type="entry name" value="Glu/AcGlu_kinase"/>
</dbReference>
<dbReference type="InterPro" id="IPR041727">
    <property type="entry name" value="NAGK-C"/>
</dbReference>
<dbReference type="NCBIfam" id="TIGR00761">
    <property type="entry name" value="argB"/>
    <property type="match status" value="1"/>
</dbReference>
<dbReference type="PANTHER" id="PTHR23342">
    <property type="entry name" value="N-ACETYLGLUTAMATE SYNTHASE"/>
    <property type="match status" value="1"/>
</dbReference>
<dbReference type="PANTHER" id="PTHR23342:SF0">
    <property type="entry name" value="N-ACETYLGLUTAMATE SYNTHASE, MITOCHONDRIAL"/>
    <property type="match status" value="1"/>
</dbReference>
<dbReference type="Pfam" id="PF00696">
    <property type="entry name" value="AA_kinase"/>
    <property type="match status" value="1"/>
</dbReference>
<dbReference type="PIRSF" id="PIRSF000728">
    <property type="entry name" value="NAGK"/>
    <property type="match status" value="1"/>
</dbReference>
<dbReference type="PRINTS" id="PR00474">
    <property type="entry name" value="GLU5KINASE"/>
</dbReference>
<dbReference type="SUPFAM" id="SSF53633">
    <property type="entry name" value="Carbamate kinase-like"/>
    <property type="match status" value="1"/>
</dbReference>
<gene>
    <name evidence="1" type="primary">argB</name>
    <name type="ordered locus">JTY_1668</name>
</gene>